<sequence length="176" mass="20795">MIDDDGYRPNVGIVICNRQGQVMWARRFGQHSWQFPQGGINPGESAEQAMYRELFEEVGLSRKDVRILASTRNWLRYKLPKRLVRWDTKPVCIGQKQKWFLLQLVSGDAEINMQTSSTPEFDGWRWVSYWYPVRQVVSFKRDVYRRVMKEFASVVMSLQENTPKPQNASAYRRKRG</sequence>
<gene>
    <name evidence="1" type="primary">rppH</name>
    <name evidence="1" type="synonym">nudH</name>
    <name type="ordered locus">ECIAI1_2938</name>
</gene>
<proteinExistence type="inferred from homology"/>
<dbReference type="EC" id="3.6.1.-" evidence="1"/>
<dbReference type="EMBL" id="CU928160">
    <property type="protein sequence ID" value="CAQ99756.1"/>
    <property type="molecule type" value="Genomic_DNA"/>
</dbReference>
<dbReference type="RefSeq" id="WP_000564489.1">
    <property type="nucleotide sequence ID" value="NC_011741.1"/>
</dbReference>
<dbReference type="SMR" id="B7LY86"/>
<dbReference type="GeneID" id="75203778"/>
<dbReference type="KEGG" id="ecr:ECIAI1_2938"/>
<dbReference type="HOGENOM" id="CLU_087195_3_2_6"/>
<dbReference type="GO" id="GO:0005737">
    <property type="term" value="C:cytoplasm"/>
    <property type="evidence" value="ECO:0007669"/>
    <property type="project" value="TreeGrafter"/>
</dbReference>
<dbReference type="GO" id="GO:0034353">
    <property type="term" value="F:mRNA 5'-diphosphatase activity"/>
    <property type="evidence" value="ECO:0007669"/>
    <property type="project" value="TreeGrafter"/>
</dbReference>
<dbReference type="GO" id="GO:0006402">
    <property type="term" value="P:mRNA catabolic process"/>
    <property type="evidence" value="ECO:0007669"/>
    <property type="project" value="TreeGrafter"/>
</dbReference>
<dbReference type="CDD" id="cd03671">
    <property type="entry name" value="NUDIX_Ap4A_hydrolase_plant_like"/>
    <property type="match status" value="1"/>
</dbReference>
<dbReference type="FunFam" id="3.90.79.10:FF:000001">
    <property type="entry name" value="RNA pyrophosphohydrolase"/>
    <property type="match status" value="1"/>
</dbReference>
<dbReference type="Gene3D" id="3.90.79.10">
    <property type="entry name" value="Nucleoside Triphosphate Pyrophosphohydrolase"/>
    <property type="match status" value="1"/>
</dbReference>
<dbReference type="HAMAP" id="MF_00298">
    <property type="entry name" value="Nudix_RppH"/>
    <property type="match status" value="1"/>
</dbReference>
<dbReference type="InterPro" id="IPR020476">
    <property type="entry name" value="Nudix_hydrolase"/>
</dbReference>
<dbReference type="InterPro" id="IPR015797">
    <property type="entry name" value="NUDIX_hydrolase-like_dom_sf"/>
</dbReference>
<dbReference type="InterPro" id="IPR020084">
    <property type="entry name" value="NUDIX_hydrolase_CS"/>
</dbReference>
<dbReference type="InterPro" id="IPR000086">
    <property type="entry name" value="NUDIX_hydrolase_dom"/>
</dbReference>
<dbReference type="InterPro" id="IPR022927">
    <property type="entry name" value="RppH"/>
</dbReference>
<dbReference type="NCBIfam" id="NF001934">
    <property type="entry name" value="PRK00714.1-1"/>
    <property type="match status" value="1"/>
</dbReference>
<dbReference type="NCBIfam" id="NF001937">
    <property type="entry name" value="PRK00714.1-4"/>
    <property type="match status" value="1"/>
</dbReference>
<dbReference type="NCBIfam" id="NF001938">
    <property type="entry name" value="PRK00714.1-5"/>
    <property type="match status" value="1"/>
</dbReference>
<dbReference type="PANTHER" id="PTHR23114">
    <property type="entry name" value="M7GPPPN-MRNA HYDROLASE"/>
    <property type="match status" value="1"/>
</dbReference>
<dbReference type="PANTHER" id="PTHR23114:SF17">
    <property type="entry name" value="M7GPPPN-MRNA HYDROLASE"/>
    <property type="match status" value="1"/>
</dbReference>
<dbReference type="Pfam" id="PF00293">
    <property type="entry name" value="NUDIX"/>
    <property type="match status" value="1"/>
</dbReference>
<dbReference type="PRINTS" id="PR00502">
    <property type="entry name" value="NUDIXFAMILY"/>
</dbReference>
<dbReference type="SUPFAM" id="SSF55811">
    <property type="entry name" value="Nudix"/>
    <property type="match status" value="1"/>
</dbReference>
<dbReference type="PROSITE" id="PS51462">
    <property type="entry name" value="NUDIX"/>
    <property type="match status" value="1"/>
</dbReference>
<dbReference type="PROSITE" id="PS00893">
    <property type="entry name" value="NUDIX_BOX"/>
    <property type="match status" value="1"/>
</dbReference>
<name>RPPH_ECO8A</name>
<evidence type="ECO:0000255" key="1">
    <source>
        <dbReference type="HAMAP-Rule" id="MF_00298"/>
    </source>
</evidence>
<keyword id="KW-0378">Hydrolase</keyword>
<reference key="1">
    <citation type="journal article" date="2009" name="PLoS Genet.">
        <title>Organised genome dynamics in the Escherichia coli species results in highly diverse adaptive paths.</title>
        <authorList>
            <person name="Touchon M."/>
            <person name="Hoede C."/>
            <person name="Tenaillon O."/>
            <person name="Barbe V."/>
            <person name="Baeriswyl S."/>
            <person name="Bidet P."/>
            <person name="Bingen E."/>
            <person name="Bonacorsi S."/>
            <person name="Bouchier C."/>
            <person name="Bouvet O."/>
            <person name="Calteau A."/>
            <person name="Chiapello H."/>
            <person name="Clermont O."/>
            <person name="Cruveiller S."/>
            <person name="Danchin A."/>
            <person name="Diard M."/>
            <person name="Dossat C."/>
            <person name="Karoui M.E."/>
            <person name="Frapy E."/>
            <person name="Garry L."/>
            <person name="Ghigo J.M."/>
            <person name="Gilles A.M."/>
            <person name="Johnson J."/>
            <person name="Le Bouguenec C."/>
            <person name="Lescat M."/>
            <person name="Mangenot S."/>
            <person name="Martinez-Jehanne V."/>
            <person name="Matic I."/>
            <person name="Nassif X."/>
            <person name="Oztas S."/>
            <person name="Petit M.A."/>
            <person name="Pichon C."/>
            <person name="Rouy Z."/>
            <person name="Ruf C.S."/>
            <person name="Schneider D."/>
            <person name="Tourret J."/>
            <person name="Vacherie B."/>
            <person name="Vallenet D."/>
            <person name="Medigue C."/>
            <person name="Rocha E.P.C."/>
            <person name="Denamur E."/>
        </authorList>
    </citation>
    <scope>NUCLEOTIDE SEQUENCE [LARGE SCALE GENOMIC DNA]</scope>
    <source>
        <strain>IAI1</strain>
    </source>
</reference>
<feature type="chain" id="PRO_1000119472" description="RNA pyrophosphohydrolase">
    <location>
        <begin position="1"/>
        <end position="176"/>
    </location>
</feature>
<feature type="domain" description="Nudix hydrolase" evidence="1">
    <location>
        <begin position="6"/>
        <end position="149"/>
    </location>
</feature>
<feature type="short sequence motif" description="Nudix box">
    <location>
        <begin position="38"/>
        <end position="59"/>
    </location>
</feature>
<accession>B7LY86</accession>
<organism>
    <name type="scientific">Escherichia coli O8 (strain IAI1)</name>
    <dbReference type="NCBI Taxonomy" id="585034"/>
    <lineage>
        <taxon>Bacteria</taxon>
        <taxon>Pseudomonadati</taxon>
        <taxon>Pseudomonadota</taxon>
        <taxon>Gammaproteobacteria</taxon>
        <taxon>Enterobacterales</taxon>
        <taxon>Enterobacteriaceae</taxon>
        <taxon>Escherichia</taxon>
    </lineage>
</organism>
<comment type="function">
    <text evidence="1">Accelerates the degradation of transcripts by removing pyrophosphate from the 5'-end of triphosphorylated RNA, leading to a more labile monophosphorylated state that can stimulate subsequent ribonuclease cleavage.</text>
</comment>
<comment type="cofactor">
    <cofactor evidence="1">
        <name>a divalent metal cation</name>
        <dbReference type="ChEBI" id="CHEBI:60240"/>
    </cofactor>
</comment>
<comment type="similarity">
    <text evidence="1">Belongs to the Nudix hydrolase family. RppH subfamily.</text>
</comment>
<protein>
    <recommendedName>
        <fullName evidence="1">RNA pyrophosphohydrolase</fullName>
        <ecNumber evidence="1">3.6.1.-</ecNumber>
    </recommendedName>
    <alternativeName>
        <fullName evidence="1">(Di)nucleoside polyphosphate hydrolase</fullName>
    </alternativeName>
</protein>